<reference key="1">
    <citation type="journal article" date="2000" name="Nature">
        <title>Sequence and analysis of chromosome 5 of the plant Arabidopsis thaliana.</title>
        <authorList>
            <person name="Tabata S."/>
            <person name="Kaneko T."/>
            <person name="Nakamura Y."/>
            <person name="Kotani H."/>
            <person name="Kato T."/>
            <person name="Asamizu E."/>
            <person name="Miyajima N."/>
            <person name="Sasamoto S."/>
            <person name="Kimura T."/>
            <person name="Hosouchi T."/>
            <person name="Kawashima K."/>
            <person name="Kohara M."/>
            <person name="Matsumoto M."/>
            <person name="Matsuno A."/>
            <person name="Muraki A."/>
            <person name="Nakayama S."/>
            <person name="Nakazaki N."/>
            <person name="Naruo K."/>
            <person name="Okumura S."/>
            <person name="Shinpo S."/>
            <person name="Takeuchi C."/>
            <person name="Wada T."/>
            <person name="Watanabe A."/>
            <person name="Yamada M."/>
            <person name="Yasuda M."/>
            <person name="Sato S."/>
            <person name="de la Bastide M."/>
            <person name="Huang E."/>
            <person name="Spiegel L."/>
            <person name="Gnoj L."/>
            <person name="O'Shaughnessy A."/>
            <person name="Preston R."/>
            <person name="Habermann K."/>
            <person name="Murray J."/>
            <person name="Johnson D."/>
            <person name="Rohlfing T."/>
            <person name="Nelson J."/>
            <person name="Stoneking T."/>
            <person name="Pepin K."/>
            <person name="Spieth J."/>
            <person name="Sekhon M."/>
            <person name="Armstrong J."/>
            <person name="Becker M."/>
            <person name="Belter E."/>
            <person name="Cordum H."/>
            <person name="Cordes M."/>
            <person name="Courtney L."/>
            <person name="Courtney W."/>
            <person name="Dante M."/>
            <person name="Du H."/>
            <person name="Edwards J."/>
            <person name="Fryman J."/>
            <person name="Haakensen B."/>
            <person name="Lamar E."/>
            <person name="Latreille P."/>
            <person name="Leonard S."/>
            <person name="Meyer R."/>
            <person name="Mulvaney E."/>
            <person name="Ozersky P."/>
            <person name="Riley A."/>
            <person name="Strowmatt C."/>
            <person name="Wagner-McPherson C."/>
            <person name="Wollam A."/>
            <person name="Yoakum M."/>
            <person name="Bell M."/>
            <person name="Dedhia N."/>
            <person name="Parnell L."/>
            <person name="Shah R."/>
            <person name="Rodriguez M."/>
            <person name="Hoon See L."/>
            <person name="Vil D."/>
            <person name="Baker J."/>
            <person name="Kirchoff K."/>
            <person name="Toth K."/>
            <person name="King L."/>
            <person name="Bahret A."/>
            <person name="Miller B."/>
            <person name="Marra M.A."/>
            <person name="Martienssen R."/>
            <person name="McCombie W.R."/>
            <person name="Wilson R.K."/>
            <person name="Murphy G."/>
            <person name="Bancroft I."/>
            <person name="Volckaert G."/>
            <person name="Wambutt R."/>
            <person name="Duesterhoeft A."/>
            <person name="Stiekema W."/>
            <person name="Pohl T."/>
            <person name="Entian K.-D."/>
            <person name="Terryn N."/>
            <person name="Hartley N."/>
            <person name="Bent E."/>
            <person name="Johnson S."/>
            <person name="Langham S.-A."/>
            <person name="McCullagh B."/>
            <person name="Robben J."/>
            <person name="Grymonprez B."/>
            <person name="Zimmermann W."/>
            <person name="Ramsperger U."/>
            <person name="Wedler H."/>
            <person name="Balke K."/>
            <person name="Wedler E."/>
            <person name="Peters S."/>
            <person name="van Staveren M."/>
            <person name="Dirkse W."/>
            <person name="Mooijman P."/>
            <person name="Klein Lankhorst R."/>
            <person name="Weitzenegger T."/>
            <person name="Bothe G."/>
            <person name="Rose M."/>
            <person name="Hauf J."/>
            <person name="Berneiser S."/>
            <person name="Hempel S."/>
            <person name="Feldpausch M."/>
            <person name="Lamberth S."/>
            <person name="Villarroel R."/>
            <person name="Gielen J."/>
            <person name="Ardiles W."/>
            <person name="Bents O."/>
            <person name="Lemcke K."/>
            <person name="Kolesov G."/>
            <person name="Mayer K.F.X."/>
            <person name="Rudd S."/>
            <person name="Schoof H."/>
            <person name="Schueller C."/>
            <person name="Zaccaria P."/>
            <person name="Mewes H.-W."/>
            <person name="Bevan M."/>
            <person name="Fransz P.F."/>
        </authorList>
    </citation>
    <scope>NUCLEOTIDE SEQUENCE [LARGE SCALE GENOMIC DNA]</scope>
    <source>
        <strain>cv. Columbia</strain>
    </source>
</reference>
<reference key="2">
    <citation type="journal article" date="2017" name="Plant J.">
        <title>Araport11: a complete reannotation of the Arabidopsis thaliana reference genome.</title>
        <authorList>
            <person name="Cheng C.Y."/>
            <person name="Krishnakumar V."/>
            <person name="Chan A.P."/>
            <person name="Thibaud-Nissen F."/>
            <person name="Schobel S."/>
            <person name="Town C.D."/>
        </authorList>
    </citation>
    <scope>GENOME REANNOTATION</scope>
    <source>
        <strain>cv. Columbia</strain>
    </source>
</reference>
<reference key="3">
    <citation type="journal article" date="2003" name="Science">
        <title>Empirical analysis of transcriptional activity in the Arabidopsis genome.</title>
        <authorList>
            <person name="Yamada K."/>
            <person name="Lim J."/>
            <person name="Dale J.M."/>
            <person name="Chen H."/>
            <person name="Shinn P."/>
            <person name="Palm C.J."/>
            <person name="Southwick A.M."/>
            <person name="Wu H.C."/>
            <person name="Kim C.J."/>
            <person name="Nguyen M."/>
            <person name="Pham P.K."/>
            <person name="Cheuk R.F."/>
            <person name="Karlin-Newmann G."/>
            <person name="Liu S.X."/>
            <person name="Lam B."/>
            <person name="Sakano H."/>
            <person name="Wu T."/>
            <person name="Yu G."/>
            <person name="Miranda M."/>
            <person name="Quach H.L."/>
            <person name="Tripp M."/>
            <person name="Chang C.H."/>
            <person name="Lee J.M."/>
            <person name="Toriumi M.J."/>
            <person name="Chan M.M."/>
            <person name="Tang C.C."/>
            <person name="Onodera C.S."/>
            <person name="Deng J.M."/>
            <person name="Akiyama K."/>
            <person name="Ansari Y."/>
            <person name="Arakawa T."/>
            <person name="Banh J."/>
            <person name="Banno F."/>
            <person name="Bowser L."/>
            <person name="Brooks S.Y."/>
            <person name="Carninci P."/>
            <person name="Chao Q."/>
            <person name="Choy N."/>
            <person name="Enju A."/>
            <person name="Goldsmith A.D."/>
            <person name="Gurjal M."/>
            <person name="Hansen N.F."/>
            <person name="Hayashizaki Y."/>
            <person name="Johnson-Hopson C."/>
            <person name="Hsuan V.W."/>
            <person name="Iida K."/>
            <person name="Karnes M."/>
            <person name="Khan S."/>
            <person name="Koesema E."/>
            <person name="Ishida J."/>
            <person name="Jiang P.X."/>
            <person name="Jones T."/>
            <person name="Kawai J."/>
            <person name="Kamiya A."/>
            <person name="Meyers C."/>
            <person name="Nakajima M."/>
            <person name="Narusaka M."/>
            <person name="Seki M."/>
            <person name="Sakurai T."/>
            <person name="Satou M."/>
            <person name="Tamse R."/>
            <person name="Vaysberg M."/>
            <person name="Wallender E.K."/>
            <person name="Wong C."/>
            <person name="Yamamura Y."/>
            <person name="Yuan S."/>
            <person name="Shinozaki K."/>
            <person name="Davis R.W."/>
            <person name="Theologis A."/>
            <person name="Ecker J.R."/>
        </authorList>
    </citation>
    <scope>NUCLEOTIDE SEQUENCE [LARGE SCALE MRNA]</scope>
    <source>
        <strain>cv. Columbia</strain>
    </source>
</reference>
<reference key="4">
    <citation type="journal article" date="2001" name="J. Biol. Chem.">
        <title>Phylogenetic analysis of the UDP-glycosyltransferase multigene family of Arabidopsis thaliana.</title>
        <authorList>
            <person name="Li Y."/>
            <person name="Baldauf S."/>
            <person name="Lim E.K."/>
            <person name="Bowles D.J."/>
        </authorList>
    </citation>
    <scope>GENE FAMILY</scope>
</reference>
<reference key="5">
    <citation type="journal article" date="2002" name="J. Biol. Chem.">
        <title>The activity of Arabidopsis glycosyltransferases toward salicylic acid, 4-hydroxybenzoic acid, and other benzoates.</title>
        <authorList>
            <person name="Lim E.K."/>
            <person name="Doucet C.J."/>
            <person name="Li Y."/>
            <person name="Elias L."/>
            <person name="Worrall D."/>
            <person name="Spencer S.P."/>
            <person name="Ross J."/>
            <person name="Bowles D.J."/>
        </authorList>
    </citation>
    <scope>FUNCTION</scope>
</reference>
<reference key="6">
    <citation type="journal article" date="2004" name="Biotechnol. Bioeng.">
        <title>Arabidopsis glycosyltransferases as biocatalysts in fermentation for regioselective synthesis of diverse quercetin glucosides.</title>
        <authorList>
            <person name="Lim E.K."/>
            <person name="Ashford D.A."/>
            <person name="Hou B."/>
            <person name="Jackson R.G."/>
            <person name="Bowles D.J."/>
        </authorList>
    </citation>
    <scope>FUNCTION</scope>
    <scope>CATALYTIC ACTIVITY</scope>
</reference>
<reference key="7">
    <citation type="journal article" date="2005" name="Plant J.">
        <title>Functional genomics by integrated analysis of metabolome and transcriptome of Arabidopsis plants over-expressing an MYB transcription factor.</title>
        <authorList>
            <person name="Tohge T."/>
            <person name="Nishiyama Y."/>
            <person name="Hirai M.Y."/>
            <person name="Yano M."/>
            <person name="Nakajima J."/>
            <person name="Awazuhara M."/>
            <person name="Inoue E."/>
            <person name="Takahashi H."/>
            <person name="Goodenowe D.B."/>
            <person name="Kitayama M."/>
            <person name="Noji M."/>
            <person name="Yamazaki M."/>
            <person name="Saito K."/>
        </authorList>
    </citation>
    <scope>FUNCTION</scope>
    <scope>CATALYTIC ACTIVITY</scope>
    <scope>INDUCTION BY PAP1</scope>
</reference>
<reference key="8">
    <citation type="journal article" date="2010" name="Mol. Plant">
        <title>The formation of anthocyanic vacuolar inclusions in Arabidopsis thaliana and implications for the sequestration of anthocyanin pigments.</title>
        <authorList>
            <person name="Pourcel L."/>
            <person name="Irani N.G."/>
            <person name="Lu Y."/>
            <person name="Riedl K."/>
            <person name="Schwartz S."/>
            <person name="Grotewold E."/>
        </authorList>
    </citation>
    <scope>FUNCTION</scope>
</reference>
<reference key="9">
    <citation type="journal article" date="2013" name="Appl. Microbiol. Biotechnol.">
        <title>Regioselective synthesis of flavonoid bisglycosides using Escherichia coli harboring two glycosyltransferases.</title>
        <authorList>
            <person name="Kim H.J."/>
            <person name="Kim B.G."/>
            <person name="Ahn J.H."/>
        </authorList>
    </citation>
    <scope>FUNCTION</scope>
    <scope>CATALYTIC ACTIVITY</scope>
</reference>
<reference key="10">
    <citation type="journal article" date="2013" name="Plant Physiol. Biochem.">
        <title>The flavonoid biosynthetic pathway in Arabidopsis: Structural and genetic diversity.</title>
        <authorList>
            <person name="Saito K."/>
            <person name="Yonekura-Sakakibara K."/>
            <person name="Nakabayashi R."/>
            <person name="Higashi Y."/>
            <person name="Yamazaki M."/>
            <person name="Tohge T."/>
            <person name="Fernie A.R."/>
        </authorList>
    </citation>
    <scope>REVIEW</scope>
    <scope>NOMENCLATURE</scope>
</reference>
<reference key="11">
    <citation type="journal article" date="2014" name="New Phytol.">
        <title>Kaempferol 3-O-rhamnoside-7-O-rhamnoside is an endogenous flavonol inhibitor of polar auxin transport in Arabidopsis shoots.</title>
        <authorList>
            <person name="Yin R."/>
            <person name="Han K."/>
            <person name="Heller W."/>
            <person name="Albert A."/>
            <person name="Dobrev P.I."/>
            <person name="Zazimalova E."/>
            <person name="Schaeffner A.R."/>
        </authorList>
    </citation>
    <scope>FUNCTION</scope>
    <scope>DISRUPTION PHENOTYPE</scope>
</reference>
<keyword id="KW-0328">Glycosyltransferase</keyword>
<keyword id="KW-0587">Phenylpropanoid metabolism</keyword>
<keyword id="KW-1185">Reference proteome</keyword>
<keyword id="KW-0808">Transferase</keyword>
<protein>
    <recommendedName>
        <fullName>Flavonol 3-O-glucosyltransferase</fullName>
        <ecNumber evidence="4 5 7">2.4.1.91</ecNumber>
    </recommendedName>
    <alternativeName>
        <fullName evidence="10">Anthocyanin 3-O-glucosyltransferase</fullName>
    </alternativeName>
    <alternativeName>
        <fullName evidence="10">UDP glucose:flavonoid 3-O-glucosyltransferase</fullName>
    </alternativeName>
    <alternativeName>
        <fullName evidence="10">UDP-glycosyltransferase 78D2</fullName>
    </alternativeName>
</protein>
<evidence type="ECO:0000250" key="1">
    <source>
        <dbReference type="UniProtKB" id="A0A0A1HA03"/>
    </source>
</evidence>
<evidence type="ECO:0000250" key="2">
    <source>
        <dbReference type="UniProtKB" id="P51094"/>
    </source>
</evidence>
<evidence type="ECO:0000269" key="3">
    <source>
    </source>
</evidence>
<evidence type="ECO:0000269" key="4">
    <source>
    </source>
</evidence>
<evidence type="ECO:0000269" key="5">
    <source>
    </source>
</evidence>
<evidence type="ECO:0000269" key="6">
    <source>
    </source>
</evidence>
<evidence type="ECO:0000269" key="7">
    <source>
    </source>
</evidence>
<evidence type="ECO:0000269" key="8">
    <source>
    </source>
</evidence>
<evidence type="ECO:0000303" key="9">
    <source>
    </source>
</evidence>
<evidence type="ECO:0000305" key="10"/>
<evidence type="ECO:0000312" key="11">
    <source>
        <dbReference type="Araport" id="AT5G17050"/>
    </source>
</evidence>
<evidence type="ECO:0000312" key="12">
    <source>
        <dbReference type="EMBL" id="CAC01718.1"/>
    </source>
</evidence>
<feature type="chain" id="PRO_0000285275" description="Flavonol 3-O-glucosyltransferase">
    <location>
        <begin position="1"/>
        <end position="460"/>
    </location>
</feature>
<feature type="active site" description="Proton acceptor" evidence="1">
    <location>
        <position position="23"/>
    </location>
</feature>
<feature type="active site" description="Charge relay" evidence="1">
    <location>
        <position position="123"/>
    </location>
</feature>
<feature type="binding site" evidence="2">
    <location>
        <position position="23"/>
    </location>
    <ligand>
        <name>an anthocyanidin</name>
        <dbReference type="ChEBI" id="CHEBI:143576"/>
    </ligand>
</feature>
<feature type="binding site" evidence="2">
    <location>
        <position position="88"/>
    </location>
    <ligand>
        <name>an anthocyanidin</name>
        <dbReference type="ChEBI" id="CHEBI:143576"/>
    </ligand>
</feature>
<feature type="binding site" evidence="1">
    <location>
        <position position="145"/>
    </location>
    <ligand>
        <name>UDP-alpha-D-glucose</name>
        <dbReference type="ChEBI" id="CHEBI:58885"/>
    </ligand>
</feature>
<feature type="binding site" evidence="2">
    <location>
        <position position="154"/>
    </location>
    <ligand>
        <name>an anthocyanidin</name>
        <dbReference type="ChEBI" id="CHEBI:143576"/>
    </ligand>
</feature>
<feature type="binding site" evidence="1">
    <location>
        <position position="339"/>
    </location>
    <ligand>
        <name>UDP-alpha-D-glucose</name>
        <dbReference type="ChEBI" id="CHEBI:58885"/>
    </ligand>
</feature>
<feature type="binding site" evidence="1">
    <location>
        <position position="341"/>
    </location>
    <ligand>
        <name>UDP-alpha-D-glucose</name>
        <dbReference type="ChEBI" id="CHEBI:58885"/>
    </ligand>
</feature>
<feature type="binding site" evidence="1">
    <location>
        <position position="356"/>
    </location>
    <ligand>
        <name>UDP-alpha-D-glucose</name>
        <dbReference type="ChEBI" id="CHEBI:58885"/>
    </ligand>
</feature>
<feature type="binding site" evidence="1">
    <location>
        <position position="359"/>
    </location>
    <ligand>
        <name>UDP-alpha-D-glucose</name>
        <dbReference type="ChEBI" id="CHEBI:58885"/>
    </ligand>
</feature>
<feature type="binding site" evidence="1">
    <location>
        <position position="360"/>
    </location>
    <ligand>
        <name>UDP-alpha-D-glucose</name>
        <dbReference type="ChEBI" id="CHEBI:58885"/>
    </ligand>
</feature>
<feature type="binding site" evidence="1">
    <location>
        <position position="361"/>
    </location>
    <ligand>
        <name>UDP-alpha-D-glucose</name>
        <dbReference type="ChEBI" id="CHEBI:58885"/>
    </ligand>
</feature>
<feature type="binding site" evidence="1">
    <location>
        <position position="364"/>
    </location>
    <ligand>
        <name>UDP-alpha-D-glucose</name>
        <dbReference type="ChEBI" id="CHEBI:58885"/>
    </ligand>
</feature>
<feature type="binding site" evidence="2">
    <location>
        <position position="379"/>
    </location>
    <ligand>
        <name>an anthocyanidin</name>
        <dbReference type="ChEBI" id="CHEBI:143576"/>
    </ligand>
</feature>
<feature type="binding site" evidence="1">
    <location>
        <position position="380"/>
    </location>
    <ligand>
        <name>UDP-alpha-D-glucose</name>
        <dbReference type="ChEBI" id="CHEBI:58885"/>
    </ligand>
</feature>
<feature type="binding site" evidence="1">
    <location>
        <position position="381"/>
    </location>
    <ligand>
        <name>UDP-alpha-D-glucose</name>
        <dbReference type="ChEBI" id="CHEBI:58885"/>
    </ligand>
</feature>
<gene>
    <name evidence="9" type="primary">UGT78D2</name>
    <name evidence="10" type="synonym">AGT</name>
    <name evidence="11" type="ordered locus">At5g17050</name>
    <name evidence="12" type="ORF">F2K13.200</name>
</gene>
<organism>
    <name type="scientific">Arabidopsis thaliana</name>
    <name type="common">Mouse-ear cress</name>
    <dbReference type="NCBI Taxonomy" id="3702"/>
    <lineage>
        <taxon>Eukaryota</taxon>
        <taxon>Viridiplantae</taxon>
        <taxon>Streptophyta</taxon>
        <taxon>Embryophyta</taxon>
        <taxon>Tracheophyta</taxon>
        <taxon>Spermatophyta</taxon>
        <taxon>Magnoliopsida</taxon>
        <taxon>eudicotyledons</taxon>
        <taxon>Gunneridae</taxon>
        <taxon>Pentapetalae</taxon>
        <taxon>rosids</taxon>
        <taxon>malvids</taxon>
        <taxon>Brassicales</taxon>
        <taxon>Brassicaceae</taxon>
        <taxon>Camelineae</taxon>
        <taxon>Arabidopsis</taxon>
    </lineage>
</organism>
<name>U78D2_ARATH</name>
<accession>Q9LFJ8</accession>
<dbReference type="EC" id="2.4.1.91" evidence="4 5 7"/>
<dbReference type="EMBL" id="AL391141">
    <property type="protein sequence ID" value="CAC01718.1"/>
    <property type="molecule type" value="Genomic_DNA"/>
</dbReference>
<dbReference type="EMBL" id="CP002688">
    <property type="protein sequence ID" value="AED92377.1"/>
    <property type="molecule type" value="Genomic_DNA"/>
</dbReference>
<dbReference type="EMBL" id="AY072325">
    <property type="protein sequence ID" value="AAL61932.1"/>
    <property type="molecule type" value="mRNA"/>
</dbReference>
<dbReference type="EMBL" id="AY128739">
    <property type="protein sequence ID" value="AAM91139.1"/>
    <property type="molecule type" value="mRNA"/>
</dbReference>
<dbReference type="PIR" id="T51560">
    <property type="entry name" value="T51560"/>
</dbReference>
<dbReference type="RefSeq" id="NP_197207.1">
    <property type="nucleotide sequence ID" value="NM_121711.5"/>
</dbReference>
<dbReference type="SMR" id="Q9LFJ8"/>
<dbReference type="FunCoup" id="Q9LFJ8">
    <property type="interactions" value="35"/>
</dbReference>
<dbReference type="STRING" id="3702.Q9LFJ8"/>
<dbReference type="CAZy" id="GT1">
    <property type="family name" value="Glycosyltransferase Family 1"/>
</dbReference>
<dbReference type="iPTMnet" id="Q9LFJ8"/>
<dbReference type="PaxDb" id="3702-AT5G17050.1"/>
<dbReference type="ProteomicsDB" id="243209"/>
<dbReference type="EnsemblPlants" id="AT5G17050.1">
    <property type="protein sequence ID" value="AT5G17050.1"/>
    <property type="gene ID" value="AT5G17050"/>
</dbReference>
<dbReference type="GeneID" id="831568"/>
<dbReference type="Gramene" id="AT5G17050.1">
    <property type="protein sequence ID" value="AT5G17050.1"/>
    <property type="gene ID" value="AT5G17050"/>
</dbReference>
<dbReference type="KEGG" id="ath:AT5G17050"/>
<dbReference type="Araport" id="AT5G17050"/>
<dbReference type="TAIR" id="AT5G17050">
    <property type="gene designation" value="UGT78D2"/>
</dbReference>
<dbReference type="eggNOG" id="KOG1192">
    <property type="taxonomic scope" value="Eukaryota"/>
</dbReference>
<dbReference type="HOGENOM" id="CLU_001724_0_2_1"/>
<dbReference type="InParanoid" id="Q9LFJ8"/>
<dbReference type="OMA" id="FMEVAPQ"/>
<dbReference type="OrthoDB" id="5835829at2759"/>
<dbReference type="PhylomeDB" id="Q9LFJ8"/>
<dbReference type="BioCyc" id="ARA:AT5G17050-MONOMER"/>
<dbReference type="BioCyc" id="MetaCyc:AT5G17050-MONOMER"/>
<dbReference type="PRO" id="PR:Q9LFJ8"/>
<dbReference type="Proteomes" id="UP000006548">
    <property type="component" value="Chromosome 5"/>
</dbReference>
<dbReference type="ExpressionAtlas" id="Q9LFJ8">
    <property type="expression patterns" value="baseline and differential"/>
</dbReference>
<dbReference type="GO" id="GO:0047213">
    <property type="term" value="F:anthocyanidin 3-O-glucosyltransferase activity"/>
    <property type="evidence" value="ECO:0000314"/>
    <property type="project" value="TAIR"/>
</dbReference>
<dbReference type="GO" id="GO:0047893">
    <property type="term" value="F:flavonol 3-O-glucosyltransferase activity"/>
    <property type="evidence" value="ECO:0007669"/>
    <property type="project" value="UniProtKB-EC"/>
</dbReference>
<dbReference type="GO" id="GO:0080043">
    <property type="term" value="F:quercetin 3-O-glucosyltransferase activity"/>
    <property type="evidence" value="ECO:0000314"/>
    <property type="project" value="TAIR"/>
</dbReference>
<dbReference type="GO" id="GO:0035251">
    <property type="term" value="F:UDP-glucosyltransferase activity"/>
    <property type="evidence" value="ECO:0000314"/>
    <property type="project" value="TAIR"/>
</dbReference>
<dbReference type="GO" id="GO:0009698">
    <property type="term" value="P:phenylpropanoid metabolic process"/>
    <property type="evidence" value="ECO:0007669"/>
    <property type="project" value="UniProtKB-KW"/>
</dbReference>
<dbReference type="CDD" id="cd03784">
    <property type="entry name" value="GT1_Gtf-like"/>
    <property type="match status" value="1"/>
</dbReference>
<dbReference type="FunFam" id="3.40.50.2000:FF:000091">
    <property type="entry name" value="Glycosyltransferase"/>
    <property type="match status" value="1"/>
</dbReference>
<dbReference type="FunFam" id="3.40.50.2000:FF:000129">
    <property type="entry name" value="Glycosyltransferase"/>
    <property type="match status" value="1"/>
</dbReference>
<dbReference type="Gene3D" id="3.40.50.2000">
    <property type="entry name" value="Glycogen Phosphorylase B"/>
    <property type="match status" value="2"/>
</dbReference>
<dbReference type="InterPro" id="IPR002213">
    <property type="entry name" value="UDP_glucos_trans"/>
</dbReference>
<dbReference type="InterPro" id="IPR035595">
    <property type="entry name" value="UDP_glycos_trans_CS"/>
</dbReference>
<dbReference type="PANTHER" id="PTHR11926">
    <property type="entry name" value="GLUCOSYL/GLUCURONOSYL TRANSFERASES"/>
    <property type="match status" value="1"/>
</dbReference>
<dbReference type="PANTHER" id="PTHR11926:SF774">
    <property type="entry name" value="UDP-GLYCOSYLTRANSFERASE 85A1-RELATED"/>
    <property type="match status" value="1"/>
</dbReference>
<dbReference type="Pfam" id="PF00201">
    <property type="entry name" value="UDPGT"/>
    <property type="match status" value="1"/>
</dbReference>
<dbReference type="SUPFAM" id="SSF53756">
    <property type="entry name" value="UDP-Glycosyltransferase/glycogen phosphorylase"/>
    <property type="match status" value="1"/>
</dbReference>
<dbReference type="PROSITE" id="PS00375">
    <property type="entry name" value="UDPGT"/>
    <property type="match status" value="1"/>
</dbReference>
<sequence>MTKPSDPTRDSHVAVLAFPFGTHAAPLLTVTRRLASASPSTVFSFFNTAQSNSSLFSSGDEADRPANIRVYDIADGVPEGYVFSGRPQEAIELFLQAAPENFRREIAKAETEVGTEVKCLMTDAFFWFAADMATEINASWIAFWTAGANSLSAHLYTDLIRETIGVKEVGERMEETIGVISGMEKIRVKDTPEGVVFGNLDSVFSKMLHQMGLALPRATAVFINSFEDLDPTLTNNLRSRFKRYLNIGPLGLLSSTLQQLVQDPHGCLAWMEKRSSGSVAYISFGTVMTPPPGELAAIAEGLESSKVPFVWSLKEKSLVQLPKGFLDRTREQGIVVPWAPQVELLKHEATGVFVTHCGWNSVLESVSGGVPMICRPFFGDQRLNGRAVEVVWEIGMTIINGVFTKDGFEKCLDKVLVQDDGKKMKCNAKKLKELAYEAVSSKGRSSENFRGLLDAVVNII</sequence>
<comment type="function">
    <text evidence="3 4 5 6 7 8">Flavonol 3-O-glucosyltransferase that catalyzes the transfer of glucose from UDP-glucose to the 3-OH position of quercetin and kaempferol (PubMed:15352060, PubMed:15807784, PubMed:23549747, PubMed:24251900). Possesses high quercetin 3-O-glucosyltransferase activity in vitro (PubMed:15352060, PubMed:23549747). Catalyzes the glycosylation of anthocyanins from UDP-glucose (PubMed:20085894). Also active in vitro on benzoates and benzoate derivatives (PubMed:11641410).</text>
</comment>
<comment type="catalytic activity">
    <reaction evidence="4 5 7">
        <text>a flavonol + UDP-alpha-D-glucose = a flavonol 3-O-beta-D-glucoside + UDP + H(+)</text>
        <dbReference type="Rhea" id="RHEA:22300"/>
        <dbReference type="ChEBI" id="CHEBI:15378"/>
        <dbReference type="ChEBI" id="CHEBI:16816"/>
        <dbReference type="ChEBI" id="CHEBI:28802"/>
        <dbReference type="ChEBI" id="CHEBI:58223"/>
        <dbReference type="ChEBI" id="CHEBI:58885"/>
        <dbReference type="EC" id="2.4.1.91"/>
    </reaction>
    <physiologicalReaction direction="left-to-right" evidence="4 5 7">
        <dbReference type="Rhea" id="RHEA:22301"/>
    </physiologicalReaction>
</comment>
<comment type="catalytic activity">
    <reaction evidence="4 5 7">
        <text>quercetin + UDP-alpha-D-glucose = quercetin 3-O-beta-D-glucoside + UDP + H(+)</text>
        <dbReference type="Rhea" id="RHEA:61180"/>
        <dbReference type="ChEBI" id="CHEBI:15378"/>
        <dbReference type="ChEBI" id="CHEBI:57694"/>
        <dbReference type="ChEBI" id="CHEBI:58223"/>
        <dbReference type="ChEBI" id="CHEBI:58885"/>
        <dbReference type="ChEBI" id="CHEBI:144437"/>
    </reaction>
    <physiologicalReaction direction="left-to-right" evidence="4 5 7">
        <dbReference type="Rhea" id="RHEA:61181"/>
    </physiologicalReaction>
</comment>
<comment type="pathway">
    <text evidence="10">Flavonoid metabolism.</text>
</comment>
<comment type="induction">
    <text evidence="5">By PAP1.</text>
</comment>
<comment type="disruption phenotype">
    <text evidence="8">Dwarf phenotype and altered flavonol glycoside pattern (PubMed:24251900). The accumulation of kaempferol 3-O-rhamnoside-7-O-rhamnoside in the mutant inhibits basipetal auxin transport in the shoot, which correlates with the dwarf phenotype (PubMed:24251900).</text>
</comment>
<comment type="similarity">
    <text evidence="10">Belongs to the UDP-glycosyltransferase family.</text>
</comment>
<proteinExistence type="evidence at protein level"/>